<accession>Q7VJX6</accession>
<comment type="similarity">
    <text evidence="1">Belongs to the bacterial ribosomal protein bL34 family.</text>
</comment>
<sequence>MKRTYQPHNTPRKRTHGFRARMKTKNGRRVINARRAKGRKRLSV</sequence>
<protein>
    <recommendedName>
        <fullName evidence="1">Large ribosomal subunit protein bL34</fullName>
    </recommendedName>
    <alternativeName>
        <fullName evidence="2">50S ribosomal protein L34</fullName>
    </alternativeName>
</protein>
<name>RL34_HELHP</name>
<evidence type="ECO:0000255" key="1">
    <source>
        <dbReference type="HAMAP-Rule" id="MF_00391"/>
    </source>
</evidence>
<evidence type="ECO:0000305" key="2"/>
<keyword id="KW-1185">Reference proteome</keyword>
<keyword id="KW-0687">Ribonucleoprotein</keyword>
<keyword id="KW-0689">Ribosomal protein</keyword>
<organism>
    <name type="scientific">Helicobacter hepaticus (strain ATCC 51449 / 3B1)</name>
    <dbReference type="NCBI Taxonomy" id="235279"/>
    <lineage>
        <taxon>Bacteria</taxon>
        <taxon>Pseudomonadati</taxon>
        <taxon>Campylobacterota</taxon>
        <taxon>Epsilonproteobacteria</taxon>
        <taxon>Campylobacterales</taxon>
        <taxon>Helicobacteraceae</taxon>
        <taxon>Helicobacter</taxon>
    </lineage>
</organism>
<reference key="1">
    <citation type="journal article" date="2003" name="Proc. Natl. Acad. Sci. U.S.A.">
        <title>The complete genome sequence of the carcinogenic bacterium Helicobacter hepaticus.</title>
        <authorList>
            <person name="Suerbaum S."/>
            <person name="Josenhans C."/>
            <person name="Sterzenbach T."/>
            <person name="Drescher B."/>
            <person name="Brandt P."/>
            <person name="Bell M."/>
            <person name="Droege M."/>
            <person name="Fartmann B."/>
            <person name="Fischer H.-P."/>
            <person name="Ge Z."/>
            <person name="Hoerster A."/>
            <person name="Holland R."/>
            <person name="Klein K."/>
            <person name="Koenig J."/>
            <person name="Macko L."/>
            <person name="Mendz G.L."/>
            <person name="Nyakatura G."/>
            <person name="Schauer D.B."/>
            <person name="Shen Z."/>
            <person name="Weber J."/>
            <person name="Frosch M."/>
            <person name="Fox J.G."/>
        </authorList>
    </citation>
    <scope>NUCLEOTIDE SEQUENCE [LARGE SCALE GENOMIC DNA]</scope>
    <source>
        <strain>ATCC 51449 / 3B1</strain>
    </source>
</reference>
<dbReference type="EMBL" id="AE017125">
    <property type="protein sequence ID" value="AAP76713.1"/>
    <property type="molecule type" value="Genomic_DNA"/>
</dbReference>
<dbReference type="RefSeq" id="WP_011114959.1">
    <property type="nucleotide sequence ID" value="NC_004917.1"/>
</dbReference>
<dbReference type="SMR" id="Q7VJX6"/>
<dbReference type="STRING" id="235279.HH_0116"/>
<dbReference type="KEGG" id="hhe:HH_0116"/>
<dbReference type="eggNOG" id="COG0230">
    <property type="taxonomic scope" value="Bacteria"/>
</dbReference>
<dbReference type="HOGENOM" id="CLU_129938_2_0_7"/>
<dbReference type="OrthoDB" id="9804164at2"/>
<dbReference type="Proteomes" id="UP000002495">
    <property type="component" value="Chromosome"/>
</dbReference>
<dbReference type="GO" id="GO:1990904">
    <property type="term" value="C:ribonucleoprotein complex"/>
    <property type="evidence" value="ECO:0007669"/>
    <property type="project" value="UniProtKB-KW"/>
</dbReference>
<dbReference type="GO" id="GO:0005840">
    <property type="term" value="C:ribosome"/>
    <property type="evidence" value="ECO:0007669"/>
    <property type="project" value="UniProtKB-KW"/>
</dbReference>
<dbReference type="GO" id="GO:0003735">
    <property type="term" value="F:structural constituent of ribosome"/>
    <property type="evidence" value="ECO:0007669"/>
    <property type="project" value="InterPro"/>
</dbReference>
<dbReference type="GO" id="GO:0006412">
    <property type="term" value="P:translation"/>
    <property type="evidence" value="ECO:0007669"/>
    <property type="project" value="UniProtKB-UniRule"/>
</dbReference>
<dbReference type="FunFam" id="1.10.287.3980:FF:000001">
    <property type="entry name" value="Mitochondrial ribosomal protein L34"/>
    <property type="match status" value="1"/>
</dbReference>
<dbReference type="Gene3D" id="1.10.287.3980">
    <property type="match status" value="1"/>
</dbReference>
<dbReference type="HAMAP" id="MF_00391">
    <property type="entry name" value="Ribosomal_bL34"/>
    <property type="match status" value="1"/>
</dbReference>
<dbReference type="InterPro" id="IPR000271">
    <property type="entry name" value="Ribosomal_bL34"/>
</dbReference>
<dbReference type="InterPro" id="IPR020939">
    <property type="entry name" value="Ribosomal_bL34_CS"/>
</dbReference>
<dbReference type="NCBIfam" id="TIGR01030">
    <property type="entry name" value="rpmH_bact"/>
    <property type="match status" value="1"/>
</dbReference>
<dbReference type="PANTHER" id="PTHR14503:SF4">
    <property type="entry name" value="LARGE RIBOSOMAL SUBUNIT PROTEIN BL34M"/>
    <property type="match status" value="1"/>
</dbReference>
<dbReference type="PANTHER" id="PTHR14503">
    <property type="entry name" value="MITOCHONDRIAL RIBOSOMAL PROTEIN 34 FAMILY MEMBER"/>
    <property type="match status" value="1"/>
</dbReference>
<dbReference type="Pfam" id="PF00468">
    <property type="entry name" value="Ribosomal_L34"/>
    <property type="match status" value="1"/>
</dbReference>
<dbReference type="PROSITE" id="PS00784">
    <property type="entry name" value="RIBOSOMAL_L34"/>
    <property type="match status" value="1"/>
</dbReference>
<feature type="chain" id="PRO_0000187391" description="Large ribosomal subunit protein bL34">
    <location>
        <begin position="1"/>
        <end position="44"/>
    </location>
</feature>
<gene>
    <name evidence="1" type="primary">rpmH</name>
    <name type="ordered locus">HH_0116</name>
</gene>
<proteinExistence type="inferred from homology"/>